<gene>
    <name type="primary">JUND</name>
</gene>
<comment type="function">
    <text evidence="3">Transcription factor binding AP-1 sites (By similarity). Heterodimerizes with proteins of the FOS family to form an AP-1 transcription factor complex, thereby enhancing their DNA binding activity to an AP-1 consensus sequence 3'-TGA[GC]TCA-5' and enhancing their transcriptional activity (By similarity).</text>
</comment>
<comment type="subunit">
    <text evidence="1 2 3">Heterodimer; binds DNA as a heterodimer (By similarity). Component of an AP-1 transcription factor complex composed of JUN-FOS heterodimers (By similarity). As part of the AP-1 transcription factor complex, forms heterodimers with FOS proteins, thereby binding to the AP-1 consensus sequence and stimulating transcription (By similarity). Forms heterodimers with FOSB; thereby binding to the AP-1 consensus sequence (By similarity). Interacts (via MBM motif) with MEN1; this interaction represses transcriptional activation (By similarity). Interacts with MAPK10; this interaction is inhibited in the presence of MEN1 (By similarity).</text>
</comment>
<comment type="subcellular location">
    <subcellularLocation>
        <location evidence="4">Nucleus</location>
    </subcellularLocation>
</comment>
<comment type="domain">
    <text evidence="3">Binds DNA via bZIP domain; DNA-binding is under control of cellular redox homeostasis (in vitro) (By similarity). To enable DNA binding, the bZIP domain must undergo a conformational rearrangement which requires the reduction of the interchain disulfide bond between FosB and JunD (in vitro) (By similarity).</text>
</comment>
<comment type="PTM">
    <text evidence="3">Phosphorylated by MAP kinases MAPK8 and MAPK10; phosphorylation is inhibited in the presence of MEN1.</text>
</comment>
<comment type="similarity">
    <text evidence="6">Belongs to the bZIP family. Jun subfamily.</text>
</comment>
<dbReference type="EMBL" id="BC151336">
    <property type="protein sequence ID" value="AAI51337.1"/>
    <property type="molecule type" value="mRNA"/>
</dbReference>
<dbReference type="RefSeq" id="NP_001096723.1">
    <property type="nucleotide sequence ID" value="NM_001103253.1"/>
</dbReference>
<dbReference type="SMR" id="A7YY54"/>
<dbReference type="FunCoup" id="A7YY54">
    <property type="interactions" value="700"/>
</dbReference>
<dbReference type="STRING" id="9913.ENSBTAP00000059607"/>
<dbReference type="iPTMnet" id="A7YY54"/>
<dbReference type="GeneID" id="517192"/>
<dbReference type="KEGG" id="bta:517192"/>
<dbReference type="CTD" id="3727"/>
<dbReference type="InParanoid" id="A7YY54"/>
<dbReference type="OrthoDB" id="2187714at2759"/>
<dbReference type="Proteomes" id="UP000009136">
    <property type="component" value="Unplaced"/>
</dbReference>
<dbReference type="GO" id="GO:0005634">
    <property type="term" value="C:nucleus"/>
    <property type="evidence" value="ECO:0007669"/>
    <property type="project" value="UniProtKB-SubCell"/>
</dbReference>
<dbReference type="GO" id="GO:0005667">
    <property type="term" value="C:transcription regulator complex"/>
    <property type="evidence" value="ECO:0000318"/>
    <property type="project" value="GO_Central"/>
</dbReference>
<dbReference type="GO" id="GO:0000981">
    <property type="term" value="F:DNA-binding transcription factor activity, RNA polymerase II-specific"/>
    <property type="evidence" value="ECO:0000318"/>
    <property type="project" value="GO_Central"/>
</dbReference>
<dbReference type="GO" id="GO:0000978">
    <property type="term" value="F:RNA polymerase II cis-regulatory region sequence-specific DNA binding"/>
    <property type="evidence" value="ECO:0000318"/>
    <property type="project" value="GO_Central"/>
</dbReference>
<dbReference type="GO" id="GO:0045944">
    <property type="term" value="P:positive regulation of transcription by RNA polymerase II"/>
    <property type="evidence" value="ECO:0000318"/>
    <property type="project" value="GO_Central"/>
</dbReference>
<dbReference type="GO" id="GO:0051726">
    <property type="term" value="P:regulation of cell cycle"/>
    <property type="evidence" value="ECO:0000318"/>
    <property type="project" value="GO_Central"/>
</dbReference>
<dbReference type="GO" id="GO:0042127">
    <property type="term" value="P:regulation of cell population proliferation"/>
    <property type="evidence" value="ECO:0000318"/>
    <property type="project" value="GO_Central"/>
</dbReference>
<dbReference type="GO" id="GO:0048545">
    <property type="term" value="P:response to steroid hormone"/>
    <property type="evidence" value="ECO:0000318"/>
    <property type="project" value="GO_Central"/>
</dbReference>
<dbReference type="CDD" id="cd14696">
    <property type="entry name" value="bZIP_Jun"/>
    <property type="match status" value="1"/>
</dbReference>
<dbReference type="FunFam" id="1.20.5.170:FF:000012">
    <property type="entry name" value="Putative transcription factor AP-1"/>
    <property type="match status" value="1"/>
</dbReference>
<dbReference type="Gene3D" id="1.20.5.170">
    <property type="match status" value="1"/>
</dbReference>
<dbReference type="InterPro" id="IPR050946">
    <property type="entry name" value="AP-1_TF_bZIP"/>
</dbReference>
<dbReference type="InterPro" id="IPR004827">
    <property type="entry name" value="bZIP"/>
</dbReference>
<dbReference type="InterPro" id="IPR046347">
    <property type="entry name" value="bZIP_sf"/>
</dbReference>
<dbReference type="InterPro" id="IPR005643">
    <property type="entry name" value="JNK"/>
</dbReference>
<dbReference type="InterPro" id="IPR002112">
    <property type="entry name" value="Leuzip_Jun"/>
</dbReference>
<dbReference type="InterPro" id="IPR008917">
    <property type="entry name" value="TF_DNA-bd_sf"/>
</dbReference>
<dbReference type="PANTHER" id="PTHR11462">
    <property type="entry name" value="JUN TRANSCRIPTION FACTOR-RELATED"/>
    <property type="match status" value="1"/>
</dbReference>
<dbReference type="PANTHER" id="PTHR11462:SF7">
    <property type="entry name" value="TRANSCRIPTION FACTOR JUND"/>
    <property type="match status" value="1"/>
</dbReference>
<dbReference type="Pfam" id="PF00170">
    <property type="entry name" value="bZIP_1"/>
    <property type="match status" value="1"/>
</dbReference>
<dbReference type="Pfam" id="PF03957">
    <property type="entry name" value="Jun"/>
    <property type="match status" value="1"/>
</dbReference>
<dbReference type="PRINTS" id="PR00043">
    <property type="entry name" value="LEUZIPPRJUN"/>
</dbReference>
<dbReference type="SMART" id="SM00338">
    <property type="entry name" value="BRLZ"/>
    <property type="match status" value="1"/>
</dbReference>
<dbReference type="SUPFAM" id="SSF47454">
    <property type="entry name" value="A DNA-binding domain in eukaryotic transcription factors"/>
    <property type="match status" value="1"/>
</dbReference>
<dbReference type="SUPFAM" id="SSF57959">
    <property type="entry name" value="Leucine zipper domain"/>
    <property type="match status" value="1"/>
</dbReference>
<dbReference type="PROSITE" id="PS50217">
    <property type="entry name" value="BZIP"/>
    <property type="match status" value="1"/>
</dbReference>
<dbReference type="PROSITE" id="PS00036">
    <property type="entry name" value="BZIP_BASIC"/>
    <property type="match status" value="1"/>
</dbReference>
<reference key="1">
    <citation type="submission" date="2007-07" db="EMBL/GenBank/DDBJ databases">
        <authorList>
            <consortium name="NIH - Mammalian Gene Collection (MGC) project"/>
        </authorList>
    </citation>
    <scope>NUCLEOTIDE SEQUENCE [LARGE SCALE MRNA]</scope>
    <source>
        <strain>Crossbred X Angus</strain>
        <tissue>Liver</tissue>
    </source>
</reference>
<keyword id="KW-1015">Disulfide bond</keyword>
<keyword id="KW-0238">DNA-binding</keyword>
<keyword id="KW-0539">Nucleus</keyword>
<keyword id="KW-0597">Phosphoprotein</keyword>
<keyword id="KW-1185">Reference proteome</keyword>
<keyword id="KW-0804">Transcription</keyword>
<keyword id="KW-0805">Transcription regulation</keyword>
<accession>A7YY54</accession>
<name>JUND_BOVIN</name>
<protein>
    <recommendedName>
        <fullName evidence="6">Transcription factor JunD</fullName>
    </recommendedName>
    <alternativeName>
        <fullName evidence="6">Transcription factor AP-1 subunit JunD</fullName>
    </alternativeName>
</protein>
<feature type="chain" id="PRO_0000311123" description="Transcription factor JunD">
    <location>
        <begin position="1"/>
        <end position="347"/>
    </location>
</feature>
<feature type="domain" description="bZIP" evidence="4">
    <location>
        <begin position="268"/>
        <end position="331"/>
    </location>
</feature>
<feature type="region of interest" description="Disordered" evidence="5">
    <location>
        <begin position="1"/>
        <end position="46"/>
    </location>
</feature>
<feature type="region of interest" description="Disordered" evidence="5">
    <location>
        <begin position="63"/>
        <end position="91"/>
    </location>
</feature>
<feature type="region of interest" description="Disordered" evidence="5">
    <location>
        <begin position="164"/>
        <end position="183"/>
    </location>
</feature>
<feature type="region of interest" description="Disordered" evidence="5">
    <location>
        <begin position="218"/>
        <end position="264"/>
    </location>
</feature>
<feature type="region of interest" description="Basic motif" evidence="4">
    <location>
        <begin position="268"/>
        <end position="295"/>
    </location>
</feature>
<feature type="region of interest" description="Leucine-zipper" evidence="4">
    <location>
        <begin position="296"/>
        <end position="324"/>
    </location>
</feature>
<feature type="short sequence motif" description="Menin-binding motif (MBM)" evidence="3">
    <location>
        <begin position="29"/>
        <end position="41"/>
    </location>
</feature>
<feature type="short sequence motif" description="MAP kinase docking motif; essential for its phosphorylation" evidence="3">
    <location>
        <begin position="48"/>
        <end position="57"/>
    </location>
</feature>
<feature type="compositionally biased region" description="Gly residues" evidence="5">
    <location>
        <begin position="13"/>
        <end position="26"/>
    </location>
</feature>
<feature type="compositionally biased region" description="Pro residues" evidence="5">
    <location>
        <begin position="220"/>
        <end position="231"/>
    </location>
</feature>
<feature type="modified residue" description="Phosphoserine" evidence="3">
    <location>
        <position position="92"/>
    </location>
</feature>
<feature type="modified residue" description="Phosphoserine; by MAPK8" evidence="3">
    <location>
        <position position="102"/>
    </location>
</feature>
<feature type="modified residue" description="Phosphothreonine" evidence="3">
    <location>
        <position position="119"/>
    </location>
</feature>
<feature type="modified residue" description="Phosphoserine" evidence="3">
    <location>
        <position position="251"/>
    </location>
</feature>
<feature type="modified residue" description="Phosphoserine" evidence="3">
    <location>
        <position position="255"/>
    </location>
</feature>
<feature type="modified residue" description="Phosphoserine" evidence="3">
    <location>
        <position position="259"/>
    </location>
</feature>
<feature type="disulfide bond" description="Interchain (with C-172 in FOSB)" evidence="3">
    <location>
        <position position="285"/>
    </location>
</feature>
<sequence length="347" mass="35352">METPFYGDEALSGLGGGGSSSGGGGSFASPGRLFPGAPPTAAPGSMMKKDALTLSLSEQVAAALKPAAAPPPGPLRTDGAPGTAPPDGLLASPELGLLKLASPELERLIIQSNGLVTTTPTSTQFLYPKVAASEEQEFAEGFVKALEDLHKQNQLSAGAASAAAAAGGPSGTAAGAAPPSELAPAAATPEAPVYANLSSYAGGTGSAGGAATVAFAAEPVPFPPPPPPGTLGPPRLAALKDEPQTVPDVPSFGESPPLSPIDMDTQERIKAERKRLRNRIAASKCRKRKLERISRLEEKVKTLKSQNTELASTASLLREQVAQLKQKVLSHVNSGCQLLPQHQVPAY</sequence>
<evidence type="ECO:0000250" key="1"/>
<evidence type="ECO:0000250" key="2">
    <source>
        <dbReference type="UniProtKB" id="P13346"/>
    </source>
</evidence>
<evidence type="ECO:0000250" key="3">
    <source>
        <dbReference type="UniProtKB" id="P17535"/>
    </source>
</evidence>
<evidence type="ECO:0000255" key="4">
    <source>
        <dbReference type="PROSITE-ProRule" id="PRU00978"/>
    </source>
</evidence>
<evidence type="ECO:0000256" key="5">
    <source>
        <dbReference type="SAM" id="MobiDB-lite"/>
    </source>
</evidence>
<evidence type="ECO:0000305" key="6"/>
<organism>
    <name type="scientific">Bos taurus</name>
    <name type="common">Bovine</name>
    <dbReference type="NCBI Taxonomy" id="9913"/>
    <lineage>
        <taxon>Eukaryota</taxon>
        <taxon>Metazoa</taxon>
        <taxon>Chordata</taxon>
        <taxon>Craniata</taxon>
        <taxon>Vertebrata</taxon>
        <taxon>Euteleostomi</taxon>
        <taxon>Mammalia</taxon>
        <taxon>Eutheria</taxon>
        <taxon>Laurasiatheria</taxon>
        <taxon>Artiodactyla</taxon>
        <taxon>Ruminantia</taxon>
        <taxon>Pecora</taxon>
        <taxon>Bovidae</taxon>
        <taxon>Bovinae</taxon>
        <taxon>Bos</taxon>
    </lineage>
</organism>
<proteinExistence type="evidence at transcript level"/>